<gene>
    <name type="primary">G</name>
</gene>
<comment type="function">
    <text evidence="2">Attaches the virus to host LDL receptors, inducing clathrin-dependent endocytosis of the virion. In the endosome, the acidic pH induces conformational changes in the glycoprotein trimer, which trigger fusion between virus and endosomal membrane.</text>
</comment>
<comment type="subunit">
    <text evidence="2">Homotrimer. Interacts with host LDL at target cell surface.</text>
</comment>
<comment type="subcellular location">
    <subcellularLocation>
        <location evidence="2">Virion membrane</location>
        <topology evidence="2">Single-pass type I membrane protein</topology>
    </subcellularLocation>
    <subcellularLocation>
        <location evidence="2">Host membrane</location>
        <topology evidence="2">Single-pass type I membrane protein</topology>
    </subcellularLocation>
</comment>
<comment type="PTM">
    <text evidence="2">Glycosylated by host. Palmitoylated by host.</text>
</comment>
<comment type="biotechnology">
    <text>Used to pseudotype many virus-like particles like lentiviral vector, because of its broad spectrum of host cell tropism. Also used in viral vectors studies in cancer therapy.</text>
</comment>
<comment type="miscellaneous">
    <text>The Ogden glycoprotein is missing the basolateral targeting signal in the cytoplasmic domain, therefore this protein should not be targeted correctly to the neurons dendrites as the other VSV G. Palmitoylation site is also missing on this domain.</text>
</comment>
<comment type="similarity">
    <text evidence="5">Belongs to the vesiculovirus glycoprotein family.</text>
</comment>
<reference key="1">
    <citation type="journal article" date="1983" name="J. Virol.">
        <title>Nucleotide sequence of a cDNA clone encoding the entire glycoprotein from the New Jersey serotype of vesicular stomatitis virus.</title>
        <authorList>
            <person name="Gallione C.J."/>
            <person name="Rose J.K."/>
        </authorList>
    </citation>
    <scope>NUCLEOTIDE SEQUENCE [GENOMIC RNA]</scope>
</reference>
<feature type="signal peptide">
    <location>
        <begin position="1"/>
        <end position="16"/>
    </location>
</feature>
<feature type="chain" id="PRO_0000041003" description="Glycoprotein">
    <location>
        <begin position="17"/>
        <end position="517"/>
    </location>
</feature>
<feature type="topological domain" description="Virion surface" evidence="4">
    <location>
        <begin position="17"/>
        <end position="474"/>
    </location>
</feature>
<feature type="transmembrane region" description="Helical" evidence="4">
    <location>
        <begin position="475"/>
        <end position="495"/>
    </location>
</feature>
<feature type="topological domain" description="Intravirion" evidence="4">
    <location>
        <begin position="496"/>
        <end position="517"/>
    </location>
</feature>
<feature type="region of interest" description="Fusion peptide" evidence="3">
    <location>
        <begin position="53"/>
        <end position="172"/>
    </location>
</feature>
<feature type="region of interest" description="Trimerization" evidence="3">
    <location>
        <begin position="259"/>
        <end position="313"/>
    </location>
</feature>
<feature type="region of interest" description="Trimerization" evidence="3">
    <location>
        <begin position="387"/>
        <end position="409"/>
    </location>
</feature>
<feature type="site" description="Involved in the interaction with host LDL receptor" evidence="3">
    <location>
        <position position="63"/>
    </location>
</feature>
<feature type="site" description="pH sensor in the pre-fusion state" evidence="3">
    <location>
        <position position="76"/>
    </location>
</feature>
<feature type="site" description="pH sensor in the pre-fusion state" evidence="3">
    <location>
        <position position="178"/>
    </location>
</feature>
<feature type="site" description="Involved in the interaction with host LDL receptor" evidence="3">
    <location>
        <position position="374"/>
    </location>
</feature>
<feature type="site" description="pH sensor in the pre-fusion state" evidence="3">
    <location>
        <position position="427"/>
    </location>
</feature>
<feature type="glycosylation site" description="N-linked (GlcNAc...) asparagine; by host" evidence="4">
    <location>
        <position position="179"/>
    </location>
</feature>
<feature type="glycosylation site" description="N-linked (GlcNAc...) asparagine; by host" evidence="4">
    <location>
        <position position="340"/>
    </location>
</feature>
<feature type="disulfide bond" evidence="1">
    <location>
        <begin position="40"/>
        <end position="304"/>
    </location>
</feature>
<feature type="disulfide bond" evidence="1">
    <location>
        <begin position="75"/>
        <end position="108"/>
    </location>
</feature>
<feature type="disulfide bond" evidence="1">
    <location>
        <begin position="84"/>
        <end position="130"/>
    </location>
</feature>
<feature type="disulfide bond" evidence="1">
    <location>
        <begin position="169"/>
        <end position="174"/>
    </location>
</feature>
<feature type="disulfide bond" evidence="1">
    <location>
        <begin position="193"/>
        <end position="240"/>
    </location>
</feature>
<feature type="disulfide bond" evidence="1">
    <location>
        <begin position="235"/>
        <end position="273"/>
    </location>
</feature>
<accession>P04882</accession>
<protein>
    <recommendedName>
        <fullName>Glycoprotein</fullName>
    </recommendedName>
</protein>
<name>GLYCO_VSNJO</name>
<dbReference type="EMBL" id="V01214">
    <property type="protein sequence ID" value="CAA24525.1"/>
    <property type="molecule type" value="Unassigned_RNA"/>
</dbReference>
<dbReference type="PIR" id="A04118">
    <property type="entry name" value="VGVNVJ"/>
</dbReference>
<dbReference type="SMR" id="P04882"/>
<dbReference type="GlyCosmos" id="P04882">
    <property type="glycosylation" value="2 sites, No reported glycans"/>
</dbReference>
<dbReference type="Proteomes" id="UP000007626">
    <property type="component" value="Genome"/>
</dbReference>
<dbReference type="GO" id="GO:0044177">
    <property type="term" value="C:host cell Golgi apparatus"/>
    <property type="evidence" value="ECO:0000314"/>
    <property type="project" value="UniProtKB"/>
</dbReference>
<dbReference type="GO" id="GO:0033644">
    <property type="term" value="C:host cell membrane"/>
    <property type="evidence" value="ECO:0007669"/>
    <property type="project" value="UniProtKB-SubCell"/>
</dbReference>
<dbReference type="GO" id="GO:0016020">
    <property type="term" value="C:membrane"/>
    <property type="evidence" value="ECO:0007669"/>
    <property type="project" value="UniProtKB-KW"/>
</dbReference>
<dbReference type="GO" id="GO:0019031">
    <property type="term" value="C:viral envelope"/>
    <property type="evidence" value="ECO:0007669"/>
    <property type="project" value="UniProtKB-KW"/>
</dbReference>
<dbReference type="GO" id="GO:0055036">
    <property type="term" value="C:virion membrane"/>
    <property type="evidence" value="ECO:0007669"/>
    <property type="project" value="UniProtKB-SubCell"/>
</dbReference>
<dbReference type="GO" id="GO:0075512">
    <property type="term" value="P:clathrin-dependent endocytosis of virus by host cell"/>
    <property type="evidence" value="ECO:0007669"/>
    <property type="project" value="UniProtKB-KW"/>
</dbReference>
<dbReference type="GO" id="GO:0098670">
    <property type="term" value="P:entry receptor-mediated virion attachment to host cell"/>
    <property type="evidence" value="ECO:0007669"/>
    <property type="project" value="UniProtKB-KW"/>
</dbReference>
<dbReference type="GO" id="GO:0039654">
    <property type="term" value="P:fusion of virus membrane with host endosome membrane"/>
    <property type="evidence" value="ECO:0007669"/>
    <property type="project" value="UniProtKB-KW"/>
</dbReference>
<dbReference type="Gene3D" id="2.30.29.130">
    <property type="match status" value="1"/>
</dbReference>
<dbReference type="Gene3D" id="2.30.30.640">
    <property type="match status" value="1"/>
</dbReference>
<dbReference type="InterPro" id="IPR055447">
    <property type="entry name" value="Rhabdo_glycop_CD"/>
</dbReference>
<dbReference type="InterPro" id="IPR001903">
    <property type="entry name" value="Rhabdo_glycop_FD"/>
</dbReference>
<dbReference type="Pfam" id="PF24833">
    <property type="entry name" value="Rhabdo_glycop_CD"/>
    <property type="match status" value="1"/>
</dbReference>
<dbReference type="Pfam" id="PF00974">
    <property type="entry name" value="Rhabdo_glycop_FD"/>
    <property type="match status" value="1"/>
</dbReference>
<dbReference type="SUPFAM" id="SSF161008">
    <property type="entry name" value="Viral glycoprotein ectodomain-like"/>
    <property type="match status" value="1"/>
</dbReference>
<sequence>MLSYLIFALAVSPILGKIEIVFPQHTTGDWKRVPHEYNYCPTSADKNSHGTQTGIPVELTMPKGLTTHQVEGFMCHSALWMTTCDFRWYGPKYITHSIHNEEPTDYQCLEAIKSYKDGVSFNPGFPPQSCGYGTVTDAEAHIVTVTPHSVKVDEYTGEWIDPHFIGGRCKGQICETVHNSTKWFTSSDGESVCSQLFTLVGGIFFSDSEEITSMGLPETGIRSNYFPYISTEGICKMPFCRKQGYKLKNDLWFQIMDPDLDKTVRDLPHIKDCDLSSSIITPGEHATDISLISDVERILDYALCQNTWSKIESGEPITPVDLSYLGPKNPGVGPVFTIINGSLHYFTSKYLRVELESPVIPRMEGKVAGTRIVRQLWDQWFPFGEVEIGPNGVLKTKQGYKFPLHIIGTGEVDSDIKMERVVKHWEHPHIEAAQTFLKKDDTGEVLYYGDTGVSKNPVELVEGWFSGWRSSLMGVLAVIIGFVILMFLIKLIGVLSSLFRPKRRPIYKSDVEMAHFR</sequence>
<proteinExistence type="evidence at protein level"/>
<keyword id="KW-1165">Clathrin-mediated endocytosis of virus by host</keyword>
<keyword id="KW-1015">Disulfide bond</keyword>
<keyword id="KW-1170">Fusion of virus membrane with host endosomal membrane</keyword>
<keyword id="KW-1168">Fusion of virus membrane with host membrane</keyword>
<keyword id="KW-0325">Glycoprotein</keyword>
<keyword id="KW-1043">Host membrane</keyword>
<keyword id="KW-0945">Host-virus interaction</keyword>
<keyword id="KW-0472">Membrane</keyword>
<keyword id="KW-1185">Reference proteome</keyword>
<keyword id="KW-0732">Signal</keyword>
<keyword id="KW-0812">Transmembrane</keyword>
<keyword id="KW-1133">Transmembrane helix</keyword>
<keyword id="KW-1161">Viral attachment to host cell</keyword>
<keyword id="KW-1234">Viral attachment to host entry receptor</keyword>
<keyword id="KW-0261">Viral envelope protein</keyword>
<keyword id="KW-1162">Viral penetration into host cytoplasm</keyword>
<keyword id="KW-0946">Virion</keyword>
<keyword id="KW-1164">Virus endocytosis by host</keyword>
<keyword id="KW-1160">Virus entry into host cell</keyword>
<organismHost>
    <name type="scientific">Aedes</name>
    <dbReference type="NCBI Taxonomy" id="7158"/>
</organismHost>
<organismHost>
    <name type="scientific">Bos taurus</name>
    <name type="common">Bovine</name>
    <dbReference type="NCBI Taxonomy" id="9913"/>
</organismHost>
<organismHost>
    <name type="scientific">Culicoides</name>
    <dbReference type="NCBI Taxonomy" id="58271"/>
</organismHost>
<organismHost>
    <name type="scientific">Equus asinus</name>
    <name type="common">Donkey</name>
    <name type="synonym">Equus africanus asinus</name>
    <dbReference type="NCBI Taxonomy" id="9793"/>
</organismHost>
<organismHost>
    <name type="scientific">Equus caballus</name>
    <name type="common">Horse</name>
    <dbReference type="NCBI Taxonomy" id="9796"/>
</organismHost>
<organismHost>
    <name type="scientific">Homo sapiens</name>
    <name type="common">Human</name>
    <dbReference type="NCBI Taxonomy" id="9606"/>
</organismHost>
<organismHost>
    <name type="scientific">Lutzomyia</name>
    <dbReference type="NCBI Taxonomy" id="252607"/>
</organismHost>
<organismHost>
    <name type="scientific">Musca domestica</name>
    <name type="common">House fly</name>
    <dbReference type="NCBI Taxonomy" id="7370"/>
</organismHost>
<organismHost>
    <name type="scientific">Simuliidae</name>
    <name type="common">black flies</name>
    <dbReference type="NCBI Taxonomy" id="7190"/>
</organismHost>
<organismHost>
    <name type="scientific">Sus scrofa</name>
    <name type="common">Pig</name>
    <dbReference type="NCBI Taxonomy" id="9823"/>
</organismHost>
<evidence type="ECO:0000250" key="1"/>
<evidence type="ECO:0000250" key="2">
    <source>
        <dbReference type="UniProtKB" id="P03522"/>
    </source>
</evidence>
<evidence type="ECO:0000250" key="3">
    <source>
        <dbReference type="UniProtKB" id="P0C2X0"/>
    </source>
</evidence>
<evidence type="ECO:0000255" key="4"/>
<evidence type="ECO:0000305" key="5"/>
<organism>
    <name type="scientific">Vesicular stomatitis New Jersey virus (strain Ogden subtype Concan)</name>
    <name type="common">VSNJV</name>
    <dbReference type="NCBI Taxonomy" id="11283"/>
    <lineage>
        <taxon>Viruses</taxon>
        <taxon>Riboviria</taxon>
        <taxon>Orthornavirae</taxon>
        <taxon>Negarnaviricota</taxon>
        <taxon>Haploviricotina</taxon>
        <taxon>Monjiviricetes</taxon>
        <taxon>Mononegavirales</taxon>
        <taxon>Rhabdoviridae</taxon>
        <taxon>Alpharhabdovirinae</taxon>
        <taxon>Vesiculovirus</taxon>
        <taxon>Vesiculovirus newjersey</taxon>
    </lineage>
</organism>